<gene>
    <name evidence="1" type="primary">rplP</name>
    <name type="ordered locus">SSA_0114</name>
</gene>
<feature type="chain" id="PRO_1000054717" description="Large ribosomal subunit protein uL16">
    <location>
        <begin position="1"/>
        <end position="137"/>
    </location>
</feature>
<sequence length="137" mass="15422">MLVPKRVKHRREFRGKMRGEAKGGKEVAFGEYGLQATTSHWITNRQIEAARIAMTRYMKRGGKVWIKIFPHKSYTAKAIGVRMGSGKGAPEGWVAPVKRGKVMFEVAGVSEEIAREALRLASHKLPVKCKFVKREAE</sequence>
<dbReference type="EMBL" id="CP000387">
    <property type="protein sequence ID" value="ABN43575.1"/>
    <property type="molecule type" value="Genomic_DNA"/>
</dbReference>
<dbReference type="RefSeq" id="WP_000960948.1">
    <property type="nucleotide sequence ID" value="NZ_CAXTYR010000005.1"/>
</dbReference>
<dbReference type="RefSeq" id="YP_001034125.1">
    <property type="nucleotide sequence ID" value="NC_009009.1"/>
</dbReference>
<dbReference type="SMR" id="A3CK70"/>
<dbReference type="STRING" id="388919.SSA_0114"/>
<dbReference type="GeneID" id="93786849"/>
<dbReference type="KEGG" id="ssa:SSA_0114"/>
<dbReference type="PATRIC" id="fig|388919.9.peg.107"/>
<dbReference type="eggNOG" id="COG0197">
    <property type="taxonomic scope" value="Bacteria"/>
</dbReference>
<dbReference type="HOGENOM" id="CLU_078858_2_1_9"/>
<dbReference type="OrthoDB" id="9802589at2"/>
<dbReference type="PRO" id="PR:A3CK70"/>
<dbReference type="Proteomes" id="UP000002148">
    <property type="component" value="Chromosome"/>
</dbReference>
<dbReference type="GO" id="GO:0022625">
    <property type="term" value="C:cytosolic large ribosomal subunit"/>
    <property type="evidence" value="ECO:0007669"/>
    <property type="project" value="TreeGrafter"/>
</dbReference>
<dbReference type="GO" id="GO:0019843">
    <property type="term" value="F:rRNA binding"/>
    <property type="evidence" value="ECO:0007669"/>
    <property type="project" value="UniProtKB-UniRule"/>
</dbReference>
<dbReference type="GO" id="GO:0003735">
    <property type="term" value="F:structural constituent of ribosome"/>
    <property type="evidence" value="ECO:0007669"/>
    <property type="project" value="InterPro"/>
</dbReference>
<dbReference type="GO" id="GO:0000049">
    <property type="term" value="F:tRNA binding"/>
    <property type="evidence" value="ECO:0007669"/>
    <property type="project" value="UniProtKB-KW"/>
</dbReference>
<dbReference type="GO" id="GO:0006412">
    <property type="term" value="P:translation"/>
    <property type="evidence" value="ECO:0007669"/>
    <property type="project" value="UniProtKB-UniRule"/>
</dbReference>
<dbReference type="CDD" id="cd01433">
    <property type="entry name" value="Ribosomal_L16_L10e"/>
    <property type="match status" value="1"/>
</dbReference>
<dbReference type="FunFam" id="3.90.1170.10:FF:000001">
    <property type="entry name" value="50S ribosomal protein L16"/>
    <property type="match status" value="1"/>
</dbReference>
<dbReference type="Gene3D" id="3.90.1170.10">
    <property type="entry name" value="Ribosomal protein L10e/L16"/>
    <property type="match status" value="1"/>
</dbReference>
<dbReference type="HAMAP" id="MF_01342">
    <property type="entry name" value="Ribosomal_uL16"/>
    <property type="match status" value="1"/>
</dbReference>
<dbReference type="InterPro" id="IPR047873">
    <property type="entry name" value="Ribosomal_uL16"/>
</dbReference>
<dbReference type="InterPro" id="IPR000114">
    <property type="entry name" value="Ribosomal_uL16_bact-type"/>
</dbReference>
<dbReference type="InterPro" id="IPR020798">
    <property type="entry name" value="Ribosomal_uL16_CS"/>
</dbReference>
<dbReference type="InterPro" id="IPR016180">
    <property type="entry name" value="Ribosomal_uL16_dom"/>
</dbReference>
<dbReference type="InterPro" id="IPR036920">
    <property type="entry name" value="Ribosomal_uL16_sf"/>
</dbReference>
<dbReference type="NCBIfam" id="TIGR01164">
    <property type="entry name" value="rplP_bact"/>
    <property type="match status" value="1"/>
</dbReference>
<dbReference type="PANTHER" id="PTHR12220">
    <property type="entry name" value="50S/60S RIBOSOMAL PROTEIN L16"/>
    <property type="match status" value="1"/>
</dbReference>
<dbReference type="PANTHER" id="PTHR12220:SF13">
    <property type="entry name" value="LARGE RIBOSOMAL SUBUNIT PROTEIN UL16M"/>
    <property type="match status" value="1"/>
</dbReference>
<dbReference type="Pfam" id="PF00252">
    <property type="entry name" value="Ribosomal_L16"/>
    <property type="match status" value="1"/>
</dbReference>
<dbReference type="PRINTS" id="PR00060">
    <property type="entry name" value="RIBOSOMALL16"/>
</dbReference>
<dbReference type="SUPFAM" id="SSF54686">
    <property type="entry name" value="Ribosomal protein L16p/L10e"/>
    <property type="match status" value="1"/>
</dbReference>
<dbReference type="PROSITE" id="PS00586">
    <property type="entry name" value="RIBOSOMAL_L16_1"/>
    <property type="match status" value="1"/>
</dbReference>
<dbReference type="PROSITE" id="PS00701">
    <property type="entry name" value="RIBOSOMAL_L16_2"/>
    <property type="match status" value="1"/>
</dbReference>
<name>RL16_STRSV</name>
<reference key="1">
    <citation type="journal article" date="2007" name="J. Bacteriol.">
        <title>Genome of the opportunistic pathogen Streptococcus sanguinis.</title>
        <authorList>
            <person name="Xu P."/>
            <person name="Alves J.M."/>
            <person name="Kitten T."/>
            <person name="Brown A."/>
            <person name="Chen Z."/>
            <person name="Ozaki L.S."/>
            <person name="Manque P."/>
            <person name="Ge X."/>
            <person name="Serrano M.G."/>
            <person name="Puiu D."/>
            <person name="Hendricks S."/>
            <person name="Wang Y."/>
            <person name="Chaplin M.D."/>
            <person name="Akan D."/>
            <person name="Paik S."/>
            <person name="Peterson D.L."/>
            <person name="Macrina F.L."/>
            <person name="Buck G.A."/>
        </authorList>
    </citation>
    <scope>NUCLEOTIDE SEQUENCE [LARGE SCALE GENOMIC DNA]</scope>
    <source>
        <strain>SK36</strain>
    </source>
</reference>
<accession>A3CK70</accession>
<comment type="function">
    <text evidence="1">Binds 23S rRNA and is also seen to make contacts with the A and possibly P site tRNAs.</text>
</comment>
<comment type="subunit">
    <text evidence="1">Part of the 50S ribosomal subunit.</text>
</comment>
<comment type="similarity">
    <text evidence="1">Belongs to the universal ribosomal protein uL16 family.</text>
</comment>
<protein>
    <recommendedName>
        <fullName evidence="1">Large ribosomal subunit protein uL16</fullName>
    </recommendedName>
    <alternativeName>
        <fullName evidence="2">50S ribosomal protein L16</fullName>
    </alternativeName>
</protein>
<proteinExistence type="inferred from homology"/>
<evidence type="ECO:0000255" key="1">
    <source>
        <dbReference type="HAMAP-Rule" id="MF_01342"/>
    </source>
</evidence>
<evidence type="ECO:0000305" key="2"/>
<keyword id="KW-1185">Reference proteome</keyword>
<keyword id="KW-0687">Ribonucleoprotein</keyword>
<keyword id="KW-0689">Ribosomal protein</keyword>
<keyword id="KW-0694">RNA-binding</keyword>
<keyword id="KW-0699">rRNA-binding</keyword>
<keyword id="KW-0820">tRNA-binding</keyword>
<organism>
    <name type="scientific">Streptococcus sanguinis (strain SK36)</name>
    <dbReference type="NCBI Taxonomy" id="388919"/>
    <lineage>
        <taxon>Bacteria</taxon>
        <taxon>Bacillati</taxon>
        <taxon>Bacillota</taxon>
        <taxon>Bacilli</taxon>
        <taxon>Lactobacillales</taxon>
        <taxon>Streptococcaceae</taxon>
        <taxon>Streptococcus</taxon>
    </lineage>
</organism>